<comment type="function">
    <text evidence="7 10 11 12 13 14 16 17 18">Toll-related receptor (PubMed:10973475). Probably specific to larval innate immunity (PubMed:22022271). Involved in the tracheal immune response of larvae to Gram-negative and perhaps Gram-positive bacteria; upon infection it negatively regulates the immune deficiency (Imd) signaling cascade specifically in the respiratory epithelium to prevent the overexpression of antimicrobial peptides (AMP) (PubMed:22022271). Involved in the NF-kappa-B-dependent apoptosis of unfit cells during cell competition (PubMed:25477468). Involved in neuron-specific glycosylation (PubMed:12588858, PubMed:17264077). Positively controls the neuromuscular junction (NMJ) growth in presynaptic motorneurons, probably via the JNK pathway (PubMed:24662564). During development of the peripheral nervous system, may function in the NF-kappa-B (rel) regulatory cascade to repress expression of the neuron-specific genes sc and ase in non-neuronal cells (PubMed:18000549). Promotes heterophilic cell adhesion with 18w in vitro (PubMed:25363762). May have a minor role in leg development (PubMed:21158756). May be involved in determining the proximal cell fate in the wing, possibly by negatively regulating the Dpp signaling pathway (PubMed:17078066). May also be involved in the Dpp signaling pathway in the eye (PubMed:17078066). Possibly functions with 18w and Toll-6 during convergent extension, to help direct proper planar cell polarity, cell intercalation and axis elongation (PubMed:25363762).</text>
</comment>
<comment type="subunit">
    <text evidence="17">May interact (via the extracellular domain) with 18w (via the extracellular domain).</text>
</comment>
<comment type="subcellular location">
    <subcellularLocation>
        <location evidence="14">Cell membrane</location>
        <topology evidence="19">Single-pass type I membrane protein</topology>
    </subcellularLocation>
    <subcellularLocation>
        <location evidence="14">Apical cell membrane</location>
    </subcellularLocation>
    <text evidence="14">In larvae, localizes to the apical cell membrane in trachea epithelial cells.</text>
</comment>
<comment type="developmental stage">
    <text evidence="7 8 9 10 12 13 14 17">At the cellular blastoderm stage, expressed in 8 segmentally repeated stripes, and 14 stripes at germ band extension (at protein level) (PubMed:12617819). Expressed in the neurogenic region during the blastoderm and germ band extension stages (at protein level) (PubMed:12617819). Expressed zygotically (PubMed:12617819). Expressed throughout development, with two peaks of expression at mid-embryogenesis (6-12 hours old embryos) and in early larvae stages (PubMed:10973475). First detected in the cellular blastoderm as two distinct anterior and posterior bands (PubMed:12588858). By germband retraction (late stage 12), segmentally repeated stripes span the width of the germband (PubMed:12588858, PubMed:25363762). In embryos (stages 12-15), detected in ectodermal cells that surround differentiating neurons of the ventral nerve cord and peripheral nervous system (PubMed:12588858). In third instar larvae, expressed at high levels in the tracheal epithelium, and at relatively lower levels in the gut and fat body (PubMed:22022271). In the wing imaginal disks, expressed in the proximal region around the wing pouch and noctum, and in the hinge regions (PubMed:17078066, PubMed:21158756). Also expressed in the anterior compartment of the leg imaginal disks (PubMed:21158756). In larvae, detected in the blood cells, lymph glands and fat body (PubMed:12617819). In third instar larvae to the pre-pupae stage, high levels of expression across the lateral noctum except where dorsocentral and scutellar bristles form (PubMed:18000549). In late stage third instar larvae, expressed throughout the lateral noctum epithelium, except for the SOPs (anterior postalar, supraalar and sensilla trichoidea) in which expression decreases as SOPs develop (PubMed:18000549).</text>
</comment>
<comment type="induction">
    <text evidence="14 15">By Gram-negative bacteria, in the respiratory epithelium (PubMed:22022271). Up-regulated during vesicular stomatitis virus (VSV) infection (PubMed:22464169).</text>
</comment>
<comment type="disruption phenotype">
    <text evidence="12 13 14 16">Viable (PubMed:18000549, PubMed:22022271). The legs of some adults have the correct number of segments but are bent between the tibia and tarsus, causing the leg to twist in the wrong direction (PubMed:21158756). Formation of ectopic bristles on the heminota (PubMed:18000549). Slight decrease in the branch length of NMJ3 and a reduced number of boutons at NMJ3 and NMJ4 (PubMed:24662564). In larvae, tracheal cell morphology is normal and basal expression levels of the AMP gene Drs are unaffected (PubMed:22022271). However after infection with Gram-negative bacteria, the respiratory epithelium displays an over-active immune response with a greater increase in expression of AMPs (Drs, Dro and AttC) compared to wild-type larvae (PubMed:22022271). In adults, no effect on the immune response to septic injury using a mixture of Gram-positive and Gram-negative bacteria; adults are able induce expression of antibacterial peptide genes (Drs, AttA, DptA and Mtk) and mount a proper innate immune response (PubMed:21158756). No visible effect on the development of the embryo central nervous system (PubMed:21158756).</text>
</comment>
<comment type="similarity">
    <text evidence="19">Belongs to the Toll-like receptor family.</text>
</comment>
<comment type="caution">
    <text evidence="1 19">In some plant proteins and in human SARM1, the TIR domain has NAD(+) hydrolase (NADase) activity (By similarity). However, despite the presence of the catalytic Asp residue, the isolated TIR domain of human TLR4 lacks NADase activity (By similarity). Based on this, it is unlikely that Toll-like receptors have NADase activity.</text>
</comment>
<name>TOLL8_DROME</name>
<proteinExistence type="evidence at protein level"/>
<organism evidence="20">
    <name type="scientific">Drosophila melanogaster</name>
    <name type="common">Fruit fly</name>
    <dbReference type="NCBI Taxonomy" id="7227"/>
    <lineage>
        <taxon>Eukaryota</taxon>
        <taxon>Metazoa</taxon>
        <taxon>Ecdysozoa</taxon>
        <taxon>Arthropoda</taxon>
        <taxon>Hexapoda</taxon>
        <taxon>Insecta</taxon>
        <taxon>Pterygota</taxon>
        <taxon>Neoptera</taxon>
        <taxon>Endopterygota</taxon>
        <taxon>Diptera</taxon>
        <taxon>Brachycera</taxon>
        <taxon>Muscomorpha</taxon>
        <taxon>Ephydroidea</taxon>
        <taxon>Drosophilidae</taxon>
        <taxon>Drosophila</taxon>
        <taxon>Sophophora</taxon>
    </lineage>
</organism>
<evidence type="ECO:0000250" key="1">
    <source>
        <dbReference type="UniProtKB" id="O00206"/>
    </source>
</evidence>
<evidence type="ECO:0000250" key="2">
    <source>
        <dbReference type="UniProtKB" id="P08953"/>
    </source>
</evidence>
<evidence type="ECO:0000255" key="3"/>
<evidence type="ECO:0000255" key="4">
    <source>
        <dbReference type="PROSITE-ProRule" id="PRU00204"/>
    </source>
</evidence>
<evidence type="ECO:0000255" key="5">
    <source>
        <dbReference type="PROSITE-ProRule" id="PRU00498"/>
    </source>
</evidence>
<evidence type="ECO:0000256" key="6">
    <source>
        <dbReference type="SAM" id="MobiDB-lite"/>
    </source>
</evidence>
<evidence type="ECO:0000269" key="7">
    <source>
    </source>
</evidence>
<evidence type="ECO:0000269" key="8">
    <source>
    </source>
</evidence>
<evidence type="ECO:0000269" key="9">
    <source>
    </source>
</evidence>
<evidence type="ECO:0000269" key="10">
    <source>
    </source>
</evidence>
<evidence type="ECO:0000269" key="11">
    <source>
    </source>
</evidence>
<evidence type="ECO:0000269" key="12">
    <source>
    </source>
</evidence>
<evidence type="ECO:0000269" key="13">
    <source>
    </source>
</evidence>
<evidence type="ECO:0000269" key="14">
    <source>
    </source>
</evidence>
<evidence type="ECO:0000269" key="15">
    <source>
    </source>
</evidence>
<evidence type="ECO:0000269" key="16">
    <source>
    </source>
</evidence>
<evidence type="ECO:0000269" key="17">
    <source>
    </source>
</evidence>
<evidence type="ECO:0000269" key="18">
    <source>
    </source>
</evidence>
<evidence type="ECO:0000305" key="19"/>
<evidence type="ECO:0000312" key="20">
    <source>
        <dbReference type="EMBL" id="AAF18983.1"/>
    </source>
</evidence>
<evidence type="ECO:0000312" key="21">
    <source>
        <dbReference type="EMBL" id="AAF49650.1"/>
    </source>
</evidence>
<evidence type="ECO:0000312" key="22">
    <source>
        <dbReference type="EMBL" id="AAF86224.1"/>
    </source>
</evidence>
<evidence type="ECO:0000312" key="23">
    <source>
        <dbReference type="EMBL" id="AAM49920.1"/>
    </source>
</evidence>
<evidence type="ECO:0000312" key="24">
    <source>
        <dbReference type="EMBL" id="ABA86508.1"/>
    </source>
</evidence>
<evidence type="ECO:0000312" key="25">
    <source>
        <dbReference type="FlyBase" id="FBgn0029114"/>
    </source>
</evidence>
<evidence type="ECO:0000312" key="26">
    <source>
        <dbReference type="Proteomes" id="UP000000803"/>
    </source>
</evidence>
<gene>
    <name evidence="25" type="primary">Tollo</name>
    <name evidence="25" type="synonym">Tl-8</name>
    <name evidence="25" type="synonym">Toll-8</name>
    <name evidence="25" type="ORF">CG6890</name>
</gene>
<dbReference type="EMBL" id="AF204158">
    <property type="protein sequence ID" value="AAF18983.1"/>
    <property type="molecule type" value="Genomic_DNA"/>
</dbReference>
<dbReference type="EMBL" id="AF247764">
    <property type="protein sequence ID" value="AAF86224.1"/>
    <property type="molecule type" value="mRNA"/>
</dbReference>
<dbReference type="EMBL" id="DQ138902">
    <property type="protein sequence ID" value="ABA86508.1"/>
    <property type="molecule type" value="Genomic_DNA"/>
</dbReference>
<dbReference type="EMBL" id="AE014296">
    <property type="protein sequence ID" value="AAF49650.1"/>
    <property type="molecule type" value="Genomic_DNA"/>
</dbReference>
<dbReference type="EMBL" id="AY118551">
    <property type="protein sequence ID" value="AAM49920.1"/>
    <property type="molecule type" value="mRNA"/>
</dbReference>
<dbReference type="RefSeq" id="NP_524757.1">
    <property type="nucleotide sequence ID" value="NM_080018.2"/>
</dbReference>
<dbReference type="SMR" id="Q9V477"/>
<dbReference type="FunCoup" id="Q9V477">
    <property type="interactions" value="2"/>
</dbReference>
<dbReference type="IntAct" id="Q9V477">
    <property type="interactions" value="5"/>
</dbReference>
<dbReference type="STRING" id="7227.FBpp0075360"/>
<dbReference type="GlyCosmos" id="Q9V477">
    <property type="glycosylation" value="14 sites, No reported glycans"/>
</dbReference>
<dbReference type="GlyGen" id="Q9V477">
    <property type="glycosylation" value="15 sites"/>
</dbReference>
<dbReference type="PaxDb" id="7227-FBpp0075360"/>
<dbReference type="DNASU" id="44497"/>
<dbReference type="EnsemblMetazoa" id="FBtr0075607">
    <property type="protein sequence ID" value="FBpp0075360"/>
    <property type="gene ID" value="FBgn0029114"/>
</dbReference>
<dbReference type="GeneID" id="44497"/>
<dbReference type="KEGG" id="dme:Dmel_CG6890"/>
<dbReference type="UCSC" id="CG6890-RA">
    <property type="organism name" value="d. melanogaster"/>
</dbReference>
<dbReference type="AGR" id="FB:FBgn0029114"/>
<dbReference type="CTD" id="44497"/>
<dbReference type="FlyBase" id="FBgn0029114">
    <property type="gene designation" value="Tollo"/>
</dbReference>
<dbReference type="VEuPathDB" id="VectorBase:FBgn0029114"/>
<dbReference type="eggNOG" id="KOG4641">
    <property type="taxonomic scope" value="Eukaryota"/>
</dbReference>
<dbReference type="GeneTree" id="ENSGT00940000170875"/>
<dbReference type="HOGENOM" id="CLU_004280_0_0_1"/>
<dbReference type="InParanoid" id="Q9V477"/>
<dbReference type="OMA" id="WSTMSLE"/>
<dbReference type="OrthoDB" id="2015831at2759"/>
<dbReference type="PhylomeDB" id="Q9V477"/>
<dbReference type="BioGRID-ORCS" id="44497">
    <property type="hits" value="0 hits in 1 CRISPR screen"/>
</dbReference>
<dbReference type="GenomeRNAi" id="44497"/>
<dbReference type="PRO" id="PR:Q9V477"/>
<dbReference type="Proteomes" id="UP000000803">
    <property type="component" value="Chromosome 3L"/>
</dbReference>
<dbReference type="Bgee" id="FBgn0029114">
    <property type="expression patterns" value="Expressed in dorsal appendage forming follicle cell in ovary and 159 other cell types or tissues"/>
</dbReference>
<dbReference type="ExpressionAtlas" id="Q9V477">
    <property type="expression patterns" value="baseline and differential"/>
</dbReference>
<dbReference type="GO" id="GO:0016324">
    <property type="term" value="C:apical plasma membrane"/>
    <property type="evidence" value="ECO:0007669"/>
    <property type="project" value="UniProtKB-SubCell"/>
</dbReference>
<dbReference type="GO" id="GO:0005886">
    <property type="term" value="C:plasma membrane"/>
    <property type="evidence" value="ECO:0000314"/>
    <property type="project" value="FlyBase"/>
</dbReference>
<dbReference type="GO" id="GO:0061809">
    <property type="term" value="F:NAD+ nucleosidase activity, cyclic ADP-ribose generating"/>
    <property type="evidence" value="ECO:0007669"/>
    <property type="project" value="UniProtKB-EC"/>
</dbReference>
<dbReference type="GO" id="GO:0048018">
    <property type="term" value="F:receptor ligand activity"/>
    <property type="evidence" value="ECO:0000353"/>
    <property type="project" value="FlyBase"/>
</dbReference>
<dbReference type="GO" id="GO:0003401">
    <property type="term" value="P:axis elongation"/>
    <property type="evidence" value="ECO:0000316"/>
    <property type="project" value="FlyBase"/>
</dbReference>
<dbReference type="GO" id="GO:0060026">
    <property type="term" value="P:convergent extension"/>
    <property type="evidence" value="ECO:0000316"/>
    <property type="project" value="FlyBase"/>
</dbReference>
<dbReference type="GO" id="GO:0045087">
    <property type="term" value="P:innate immune response"/>
    <property type="evidence" value="ECO:0007669"/>
    <property type="project" value="UniProtKB-KW"/>
</dbReference>
<dbReference type="GO" id="GO:0048935">
    <property type="term" value="P:peripheral nervous system neuron development"/>
    <property type="evidence" value="ECO:0000315"/>
    <property type="project" value="FlyBase"/>
</dbReference>
<dbReference type="GO" id="GO:0060049">
    <property type="term" value="P:regulation of protein glycosylation"/>
    <property type="evidence" value="ECO:0000315"/>
    <property type="project" value="FlyBase"/>
</dbReference>
<dbReference type="GO" id="GO:0007165">
    <property type="term" value="P:signal transduction"/>
    <property type="evidence" value="ECO:0000315"/>
    <property type="project" value="FlyBase"/>
</dbReference>
<dbReference type="FunFam" id="3.80.10.10:FF:000198">
    <property type="entry name" value="Blast:Protein toll"/>
    <property type="match status" value="1"/>
</dbReference>
<dbReference type="FunFam" id="3.80.10.10:FF:000491">
    <property type="entry name" value="Blast:Protein toll"/>
    <property type="match status" value="1"/>
</dbReference>
<dbReference type="FunFam" id="3.40.50.10140:FF:000021">
    <property type="entry name" value="Toll receptor 13"/>
    <property type="match status" value="1"/>
</dbReference>
<dbReference type="FunFam" id="3.80.10.10:FF:000401">
    <property type="entry name" value="TOLL-like receptor 11"/>
    <property type="match status" value="1"/>
</dbReference>
<dbReference type="FunFam" id="3.80.10.10:FF:000355">
    <property type="entry name" value="Toll-like receptor Tollo"/>
    <property type="match status" value="1"/>
</dbReference>
<dbReference type="FunFam" id="3.80.10.10:FF:001289">
    <property type="entry name" value="Toll-like receptor Tollo"/>
    <property type="match status" value="1"/>
</dbReference>
<dbReference type="Gene3D" id="3.80.10.10">
    <property type="entry name" value="Ribonuclease Inhibitor"/>
    <property type="match status" value="8"/>
</dbReference>
<dbReference type="Gene3D" id="3.40.50.10140">
    <property type="entry name" value="Toll/interleukin-1 receptor homology (TIR) domain"/>
    <property type="match status" value="1"/>
</dbReference>
<dbReference type="InterPro" id="IPR050328">
    <property type="entry name" value="Dev_Immune_Receptor"/>
</dbReference>
<dbReference type="InterPro" id="IPR001611">
    <property type="entry name" value="Leu-rich_rpt"/>
</dbReference>
<dbReference type="InterPro" id="IPR003591">
    <property type="entry name" value="Leu-rich_rpt_typical-subtyp"/>
</dbReference>
<dbReference type="InterPro" id="IPR026906">
    <property type="entry name" value="LRR_5"/>
</dbReference>
<dbReference type="InterPro" id="IPR032675">
    <property type="entry name" value="LRR_dom_sf"/>
</dbReference>
<dbReference type="InterPro" id="IPR000157">
    <property type="entry name" value="TIR_dom"/>
</dbReference>
<dbReference type="InterPro" id="IPR035897">
    <property type="entry name" value="Toll_tir_struct_dom_sf"/>
</dbReference>
<dbReference type="PANTHER" id="PTHR24373:SF370">
    <property type="entry name" value="FISH-LIPS, ISOFORM E"/>
    <property type="match status" value="1"/>
</dbReference>
<dbReference type="PANTHER" id="PTHR24373">
    <property type="entry name" value="SLIT RELATED LEUCINE-RICH REPEAT NEURONAL PROTEIN"/>
    <property type="match status" value="1"/>
</dbReference>
<dbReference type="Pfam" id="PF13306">
    <property type="entry name" value="LRR_5"/>
    <property type="match status" value="1"/>
</dbReference>
<dbReference type="Pfam" id="PF13855">
    <property type="entry name" value="LRR_8"/>
    <property type="match status" value="5"/>
</dbReference>
<dbReference type="Pfam" id="PF13676">
    <property type="entry name" value="TIR_2"/>
    <property type="match status" value="1"/>
</dbReference>
<dbReference type="PRINTS" id="PR01537">
    <property type="entry name" value="INTRLKN1R1F"/>
</dbReference>
<dbReference type="SMART" id="SM00365">
    <property type="entry name" value="LRR_SD22"/>
    <property type="match status" value="11"/>
</dbReference>
<dbReference type="SMART" id="SM00369">
    <property type="entry name" value="LRR_TYP"/>
    <property type="match status" value="25"/>
</dbReference>
<dbReference type="SMART" id="SM00255">
    <property type="entry name" value="TIR"/>
    <property type="match status" value="1"/>
</dbReference>
<dbReference type="SUPFAM" id="SSF52058">
    <property type="entry name" value="L domain-like"/>
    <property type="match status" value="4"/>
</dbReference>
<dbReference type="SUPFAM" id="SSF52200">
    <property type="entry name" value="Toll/Interleukin receptor TIR domain"/>
    <property type="match status" value="1"/>
</dbReference>
<dbReference type="PROSITE" id="PS51450">
    <property type="entry name" value="LRR"/>
    <property type="match status" value="23"/>
</dbReference>
<dbReference type="PROSITE" id="PS50104">
    <property type="entry name" value="TIR"/>
    <property type="match status" value="1"/>
</dbReference>
<sequence>MLATTHMLYVLIATCVIPIFGAALSKTVLYQAPDECRWSGGGEHDITLVCHLRTINSELENTNFSVIQPQNTVRLRLECNDALFFQSSLSPDSFRSLVELRDLTIEYCKLGNLTDGSFRGLQELRNLTIRTHNGDWSTMSLEMASNSFVEFRQLERLDLSLNNIWLIPDGMVCPLKSLQHLNASYNKIQDISNFYFSASLSSRKARVCGSTLQSLDLSANKMVSLPTAMLSALGRLTHLNMAKNSMSFLADRAFEGLLSLRVVDLSANRLTSLPPELFAETKQLQEIYLRNNSINVLAPGIFGELAELLVLDLASNELNSQWINAATFVGLKRLMMLDLSANKISRLEAHIFRPLASLQILKLEDNYIDQLPGGIFADLTNLHTLILSRNRISVIEQRTLQGLKNLLVLSLDFNRISRMDQRSLVNCSQLQDLHLNDNKLQAVPEALAHVQLLKTLDVGENMISQIENTSITQLESLYGLRMTENSLTHIRRGVFDRMSSLQILNLSQNKLKSIEAGSLQRNSQLQAIRLDGNQLKSIAGLFTELPNLVWLNISGNRLEKFDYSHIPIGLQWLDVRANRITQLGNYFEIESELSLSTFDASYNLLTEITASSIPNSVEVLYLNDNQISKIQPYTFFKKPNLTRVDLVRNRLTTLEPNALRLSPIAEDREIPEFYIGHNAYECDCNLDWLQKVNRESRTQPQLMDLDQIHCRLAYARGSSHVSLIEAKSDDFLCKYASHCFALCHCCDFQACDCKMECPDRCSCYHDQSWTSNVVDCSRASYEQTLPSHIPMDSTQLYLDGNNFRELQSHAFIGRKRLKVLHLNHSRIEVLHNRTFYGLLELEVLQLQSNQLKALNGNEFQGLDNLQELYLQHNAIATIDTLTFTHLYHLKILRLDHNAITSFAVWNFLPSYLNELRLASNPWTCSCEFIDKLRDYINRHEYVVDKLKMKCDVISGNSTQQMVIYPGSGEPASLPVVQCSQTLPLGLDNNFNYAEQAGGENASNATSTKMILNQPPKLDYIPILVAILTAFIFVMICISLVFIFRQEMRVWCHSRFGVRLFYNAQKDVDKNEREKLFDAFVSYSSKDELFVNEELAPMLEMGEHRYKLCLHQRDFPVGGYLPETIVQAIDSSRRTIMVVSENFIKSEWCRFEFKSAHQSVLRDRRRRLIVIVLGEVPQKELDPDLRLYLKTNTYLQWGDKLFWQKLRFALPDVSSSQRSNVAGQSCHVPINHASYHHHHHVHQQAMPLPHSVHHHQQQFMLPPPPQQPGSFRRQPSLHQQQQQQQQIRGNNNTTQQQQQQQAALLMGGGSVGGPAPQMIPLAGGIQQQSLPLPPNQQPTPASRNLHM</sequence>
<reference evidence="20" key="1">
    <citation type="journal article" date="1999" name="Glycobiology">
        <title>Tollo regulates neural expression of the HRP-epitope in Drosophila.</title>
        <authorList>
            <person name="Seppo A."/>
            <person name="Matani P."/>
            <person name="Tiemeyer M."/>
        </authorList>
    </citation>
    <scope>NUCLEOTIDE SEQUENCE [GENOMIC DNA]</scope>
    <source>
        <strain evidence="20">Oregon-R</strain>
    </source>
</reference>
<reference evidence="22" key="2">
    <citation type="journal article" date="2000" name="Proc. Natl. Acad. Sci. U.S.A.">
        <title>Toll-related receptors and the control of antimicrobial peptide expression in Drosophila.</title>
        <authorList>
            <person name="Tauszig S."/>
            <person name="Jouanguy E."/>
            <person name="Hoffmann J.A."/>
            <person name="Imler J.L."/>
        </authorList>
    </citation>
    <scope>NUCLEOTIDE SEQUENCE [MRNA]</scope>
    <scope>FUNCTION</scope>
    <scope>DEVELOPMENTAL STAGE</scope>
</reference>
<reference evidence="24" key="3">
    <citation type="journal article" date="2005" name="Mol. Biol. Evol.">
        <title>Intragenic Hill-Robertson interference influences selection intensity on synonymous mutations in Drosophila.</title>
        <authorList>
            <person name="Comeron J.M."/>
            <person name="Guthrie T.B."/>
        </authorList>
    </citation>
    <scope>NUCLEOTIDE SEQUENCE [GENOMIC DNA]</scope>
    <source>
        <strain evidence="24">Ral1</strain>
    </source>
</reference>
<reference evidence="26" key="4">
    <citation type="journal article" date="2000" name="Science">
        <title>The genome sequence of Drosophila melanogaster.</title>
        <authorList>
            <person name="Adams M.D."/>
            <person name="Celniker S.E."/>
            <person name="Holt R.A."/>
            <person name="Evans C.A."/>
            <person name="Gocayne J.D."/>
            <person name="Amanatides P.G."/>
            <person name="Scherer S.E."/>
            <person name="Li P.W."/>
            <person name="Hoskins R.A."/>
            <person name="Galle R.F."/>
            <person name="George R.A."/>
            <person name="Lewis S.E."/>
            <person name="Richards S."/>
            <person name="Ashburner M."/>
            <person name="Henderson S.N."/>
            <person name="Sutton G.G."/>
            <person name="Wortman J.R."/>
            <person name="Yandell M.D."/>
            <person name="Zhang Q."/>
            <person name="Chen L.X."/>
            <person name="Brandon R.C."/>
            <person name="Rogers Y.-H.C."/>
            <person name="Blazej R.G."/>
            <person name="Champe M."/>
            <person name="Pfeiffer B.D."/>
            <person name="Wan K.H."/>
            <person name="Doyle C."/>
            <person name="Baxter E.G."/>
            <person name="Helt G."/>
            <person name="Nelson C.R."/>
            <person name="Miklos G.L.G."/>
            <person name="Abril J.F."/>
            <person name="Agbayani A."/>
            <person name="An H.-J."/>
            <person name="Andrews-Pfannkoch C."/>
            <person name="Baldwin D."/>
            <person name="Ballew R.M."/>
            <person name="Basu A."/>
            <person name="Baxendale J."/>
            <person name="Bayraktaroglu L."/>
            <person name="Beasley E.M."/>
            <person name="Beeson K.Y."/>
            <person name="Benos P.V."/>
            <person name="Berman B.P."/>
            <person name="Bhandari D."/>
            <person name="Bolshakov S."/>
            <person name="Borkova D."/>
            <person name="Botchan M.R."/>
            <person name="Bouck J."/>
            <person name="Brokstein P."/>
            <person name="Brottier P."/>
            <person name="Burtis K.C."/>
            <person name="Busam D.A."/>
            <person name="Butler H."/>
            <person name="Cadieu E."/>
            <person name="Center A."/>
            <person name="Chandra I."/>
            <person name="Cherry J.M."/>
            <person name="Cawley S."/>
            <person name="Dahlke C."/>
            <person name="Davenport L.B."/>
            <person name="Davies P."/>
            <person name="de Pablos B."/>
            <person name="Delcher A."/>
            <person name="Deng Z."/>
            <person name="Mays A.D."/>
            <person name="Dew I."/>
            <person name="Dietz S.M."/>
            <person name="Dodson K."/>
            <person name="Doup L.E."/>
            <person name="Downes M."/>
            <person name="Dugan-Rocha S."/>
            <person name="Dunkov B.C."/>
            <person name="Dunn P."/>
            <person name="Durbin K.J."/>
            <person name="Evangelista C.C."/>
            <person name="Ferraz C."/>
            <person name="Ferriera S."/>
            <person name="Fleischmann W."/>
            <person name="Fosler C."/>
            <person name="Gabrielian A.E."/>
            <person name="Garg N.S."/>
            <person name="Gelbart W.M."/>
            <person name="Glasser K."/>
            <person name="Glodek A."/>
            <person name="Gong F."/>
            <person name="Gorrell J.H."/>
            <person name="Gu Z."/>
            <person name="Guan P."/>
            <person name="Harris M."/>
            <person name="Harris N.L."/>
            <person name="Harvey D.A."/>
            <person name="Heiman T.J."/>
            <person name="Hernandez J.R."/>
            <person name="Houck J."/>
            <person name="Hostin D."/>
            <person name="Houston K.A."/>
            <person name="Howland T.J."/>
            <person name="Wei M.-H."/>
            <person name="Ibegwam C."/>
            <person name="Jalali M."/>
            <person name="Kalush F."/>
            <person name="Karpen G.H."/>
            <person name="Ke Z."/>
            <person name="Kennison J.A."/>
            <person name="Ketchum K.A."/>
            <person name="Kimmel B.E."/>
            <person name="Kodira C.D."/>
            <person name="Kraft C.L."/>
            <person name="Kravitz S."/>
            <person name="Kulp D."/>
            <person name="Lai Z."/>
            <person name="Lasko P."/>
            <person name="Lei Y."/>
            <person name="Levitsky A.A."/>
            <person name="Li J.H."/>
            <person name="Li Z."/>
            <person name="Liang Y."/>
            <person name="Lin X."/>
            <person name="Liu X."/>
            <person name="Mattei B."/>
            <person name="McIntosh T.C."/>
            <person name="McLeod M.P."/>
            <person name="McPherson D."/>
            <person name="Merkulov G."/>
            <person name="Milshina N.V."/>
            <person name="Mobarry C."/>
            <person name="Morris J."/>
            <person name="Moshrefi A."/>
            <person name="Mount S.M."/>
            <person name="Moy M."/>
            <person name="Murphy B."/>
            <person name="Murphy L."/>
            <person name="Muzny D.M."/>
            <person name="Nelson D.L."/>
            <person name="Nelson D.R."/>
            <person name="Nelson K.A."/>
            <person name="Nixon K."/>
            <person name="Nusskern D.R."/>
            <person name="Pacleb J.M."/>
            <person name="Palazzolo M."/>
            <person name="Pittman G.S."/>
            <person name="Pan S."/>
            <person name="Pollard J."/>
            <person name="Puri V."/>
            <person name="Reese M.G."/>
            <person name="Reinert K."/>
            <person name="Remington K."/>
            <person name="Saunders R.D.C."/>
            <person name="Scheeler F."/>
            <person name="Shen H."/>
            <person name="Shue B.C."/>
            <person name="Siden-Kiamos I."/>
            <person name="Simpson M."/>
            <person name="Skupski M.P."/>
            <person name="Smith T.J."/>
            <person name="Spier E."/>
            <person name="Spradling A.C."/>
            <person name="Stapleton M."/>
            <person name="Strong R."/>
            <person name="Sun E."/>
            <person name="Svirskas R."/>
            <person name="Tector C."/>
            <person name="Turner R."/>
            <person name="Venter E."/>
            <person name="Wang A.H."/>
            <person name="Wang X."/>
            <person name="Wang Z.-Y."/>
            <person name="Wassarman D.A."/>
            <person name="Weinstock G.M."/>
            <person name="Weissenbach J."/>
            <person name="Williams S.M."/>
            <person name="Woodage T."/>
            <person name="Worley K.C."/>
            <person name="Wu D."/>
            <person name="Yang S."/>
            <person name="Yao Q.A."/>
            <person name="Ye J."/>
            <person name="Yeh R.-F."/>
            <person name="Zaveri J.S."/>
            <person name="Zhan M."/>
            <person name="Zhang G."/>
            <person name="Zhao Q."/>
            <person name="Zheng L."/>
            <person name="Zheng X.H."/>
            <person name="Zhong F.N."/>
            <person name="Zhong W."/>
            <person name="Zhou X."/>
            <person name="Zhu S.C."/>
            <person name="Zhu X."/>
            <person name="Smith H.O."/>
            <person name="Gibbs R.A."/>
            <person name="Myers E.W."/>
            <person name="Rubin G.M."/>
            <person name="Venter J.C."/>
        </authorList>
    </citation>
    <scope>NUCLEOTIDE SEQUENCE [LARGE SCALE GENOMIC DNA]</scope>
    <source>
        <strain evidence="26">Berkeley</strain>
    </source>
</reference>
<reference evidence="26" key="5">
    <citation type="journal article" date="2002" name="Genome Biol.">
        <title>Annotation of the Drosophila melanogaster euchromatic genome: a systematic review.</title>
        <authorList>
            <person name="Misra S."/>
            <person name="Crosby M.A."/>
            <person name="Mungall C.J."/>
            <person name="Matthews B.B."/>
            <person name="Campbell K.S."/>
            <person name="Hradecky P."/>
            <person name="Huang Y."/>
            <person name="Kaminker J.S."/>
            <person name="Millburn G.H."/>
            <person name="Prochnik S.E."/>
            <person name="Smith C.D."/>
            <person name="Tupy J.L."/>
            <person name="Whitfield E.J."/>
            <person name="Bayraktaroglu L."/>
            <person name="Berman B.P."/>
            <person name="Bettencourt B.R."/>
            <person name="Celniker S.E."/>
            <person name="de Grey A.D.N.J."/>
            <person name="Drysdale R.A."/>
            <person name="Harris N.L."/>
            <person name="Richter J."/>
            <person name="Russo S."/>
            <person name="Schroeder A.J."/>
            <person name="Shu S.Q."/>
            <person name="Stapleton M."/>
            <person name="Yamada C."/>
            <person name="Ashburner M."/>
            <person name="Gelbart W.M."/>
            <person name="Rubin G.M."/>
            <person name="Lewis S.E."/>
        </authorList>
    </citation>
    <scope>GENOME REANNOTATION</scope>
    <source>
        <strain evidence="26">Berkeley</strain>
    </source>
</reference>
<reference evidence="23" key="6">
    <citation type="submission" date="2002-06" db="EMBL/GenBank/DDBJ databases">
        <authorList>
            <person name="Stapleton M."/>
            <person name="Brokstein P."/>
            <person name="Hong L."/>
            <person name="Agbayani A."/>
            <person name="Carlson J."/>
            <person name="Champe M."/>
            <person name="Chavez C."/>
            <person name="Dorsett V."/>
            <person name="Dresnek D."/>
            <person name="Farfan D."/>
            <person name="Frise E."/>
            <person name="George R."/>
            <person name="Gonzalez M."/>
            <person name="Guarin H."/>
            <person name="Kronmiller B."/>
            <person name="Li P."/>
            <person name="Liao G."/>
            <person name="Miranda A."/>
            <person name="Mungall C.J."/>
            <person name="Nunoo J."/>
            <person name="Pacleb J."/>
            <person name="Paragas V."/>
            <person name="Park S."/>
            <person name="Patel S."/>
            <person name="Phouanenavong S."/>
            <person name="Wan K."/>
            <person name="Yu C."/>
            <person name="Lewis S.E."/>
            <person name="Rubin G.M."/>
            <person name="Celniker S."/>
        </authorList>
    </citation>
    <scope>NUCLEOTIDE SEQUENCE [LARGE SCALE MRNA]</scope>
    <source>
        <strain evidence="23">Berkeley</strain>
    </source>
</reference>
<reference evidence="21" key="7">
    <citation type="submission" date="2006-08" db="EMBL/GenBank/DDBJ databases">
        <authorList>
            <person name="Celniker S."/>
            <person name="Carlson J."/>
            <person name="Wan K."/>
            <person name="Frise E."/>
            <person name="Hoskins R."/>
            <person name="Park S."/>
            <person name="Svirskas R."/>
            <person name="Rubin G."/>
        </authorList>
    </citation>
    <scope>NUCLEOTIDE SEQUENCE [LARGE SCALE MRNA]</scope>
</reference>
<reference evidence="19" key="8">
    <citation type="journal article" date="2002" name="Gene Expr. Patterns">
        <title>Tissue and stage-specific expression of the Tolls in Drosophila embryos.</title>
        <authorList>
            <person name="Kambris Z."/>
            <person name="Hoffmann J.A."/>
            <person name="Imler J.L."/>
            <person name="Capovilla M."/>
        </authorList>
    </citation>
    <scope>DEVELOPMENTAL STAGE</scope>
</reference>
<reference evidence="19" key="9">
    <citation type="journal article" date="2003" name="Development">
        <title>Induction of neuron-specific glycosylation by Tollo/Toll-8, a Drosophila Toll-like receptor expressed in non-neural cells.</title>
        <authorList>
            <person name="Seppo A."/>
            <person name="Matani P."/>
            <person name="Sharrow M."/>
            <person name="Tiemeyer M."/>
        </authorList>
    </citation>
    <scope>DEVELOPMENTAL STAGE</scope>
</reference>
<reference evidence="19" key="10">
    <citation type="journal article" date="2006" name="Genesis">
        <title>Ectopic expression of Tollo/Toll-8 antagonizes Dpp signaling and induces cell sorting in the Drosophila wing.</title>
        <authorList>
            <person name="Kim S."/>
            <person name="Chung S."/>
            <person name="Yoon J."/>
            <person name="Choi K.W."/>
            <person name="Yim J."/>
        </authorList>
    </citation>
    <scope>FUNCTION</scope>
    <scope>DEVELOPMENTAL STAGE</scope>
</reference>
<reference evidence="19" key="11">
    <citation type="journal article" date="2007" name="J. Biol. Chem.">
        <title>Dynamic developmental elaboration of N-linked glycan complexity in the Drosophila melanogaster embryo.</title>
        <authorList>
            <person name="Aoki K."/>
            <person name="Perlman M."/>
            <person name="Lim J.M."/>
            <person name="Cantu R."/>
            <person name="Wells L."/>
            <person name="Tiemeyer M."/>
        </authorList>
    </citation>
    <scope>FUNCTION</scope>
</reference>
<reference evidence="19" key="12">
    <citation type="journal article" date="2007" name="PLoS ONE">
        <title>NF-kappaB/Rel-mediated regulation of the neural fate in Drosophila.</title>
        <authorList>
            <person name="Ayyar S."/>
            <person name="Pistillo D."/>
            <person name="Calleja M."/>
            <person name="Brookfield A."/>
            <person name="Gittins K."/>
            <person name="Goldstone C."/>
            <person name="Simpson P."/>
        </authorList>
    </citation>
    <scope>FUNCTION</scope>
    <scope>DEVELOPMENTAL STAGE</scope>
    <scope>DISRUPTION PHENOTYPE</scope>
</reference>
<reference evidence="19" key="13">
    <citation type="journal article" date="2010" name="Dev. Growth Differ.">
        <title>Functional analysis of Toll-related genes in Drosophila.</title>
        <authorList>
            <person name="Yagi Y."/>
            <person name="Nishida Y."/>
            <person name="Ip Y.T."/>
        </authorList>
    </citation>
    <scope>FUNCTION</scope>
    <scope>DEVELOPMENTAL STAGE</scope>
    <scope>DISRUPTION PHENOTYPE</scope>
</reference>
<reference evidence="19" key="14">
    <citation type="journal article" date="2011" name="PLoS Pathog.">
        <title>Toll-8/Tollo negatively regulates antimicrobial response in the Drosophila respiratory epithelium.</title>
        <authorList>
            <person name="Akhouayri I."/>
            <person name="Turc C."/>
            <person name="Royet J."/>
            <person name="Charroux B."/>
        </authorList>
    </citation>
    <scope>FUNCTION</scope>
    <scope>SUBCELLULAR LOCATION</scope>
    <scope>DEVELOPMENTAL STAGE</scope>
    <scope>INDUCTION BY BACTERIA</scope>
    <scope>DISRUPTION PHENOTYPE</scope>
</reference>
<reference key="15">
    <citation type="journal article" date="2012" name="Immunity">
        <title>Virus recognition by Toll-7 activates antiviral autophagy in Drosophila.</title>
        <authorList>
            <person name="Nakamoto M."/>
            <person name="Moy R.H."/>
            <person name="Xu J."/>
            <person name="Bambina S."/>
            <person name="Yasunaga A."/>
            <person name="Shelly S.S."/>
            <person name="Gold B."/>
            <person name="Cherry S."/>
        </authorList>
    </citation>
    <scope>INDUCTION BY VIRAL INFECTION</scope>
</reference>
<reference key="16">
    <citation type="journal article" date="2014" name="J. Cell Biol.">
        <title>Retrograde neurotrophin signaling through Tollo regulates synaptic growth in Drosophila.</title>
        <authorList>
            <person name="Ballard S.L."/>
            <person name="Miller D.L."/>
            <person name="Ganetzky B."/>
        </authorList>
    </citation>
    <scope>FUNCTION</scope>
    <scope>DISRUPTION PHENOTYPE</scope>
</reference>
<reference key="17">
    <citation type="journal article" date="2014" name="Nature">
        <title>A positional Toll receptor code directs convergent extension in Drosophila.</title>
        <authorList>
            <person name="Pare A.C."/>
            <person name="Vichas A."/>
            <person name="Fincher C.T."/>
            <person name="Mirman Z."/>
            <person name="Farrell D.L."/>
            <person name="Mainieri A."/>
            <person name="Zallen J.A."/>
        </authorList>
    </citation>
    <scope>FUNCTION</scope>
    <scope>INTERACTION WITH 18W</scope>
    <scope>DEVELOPMENTAL STAGE</scope>
</reference>
<reference key="18">
    <citation type="journal article" date="2014" name="Science">
        <title>An ancient defense system eliminates unfit cells from developing tissues during cell competition.</title>
        <authorList>
            <person name="Meyer S.N."/>
            <person name="Amoyel M."/>
            <person name="Bergantinos C."/>
            <person name="de la Cova C."/>
            <person name="Schertel C."/>
            <person name="Basler K."/>
            <person name="Johnston L.A."/>
        </authorList>
    </citation>
    <scope>FUNCTION</scope>
</reference>
<accession>Q9V477</accession>
<accession>Q2XXW0</accession>
<protein>
    <recommendedName>
        <fullName evidence="19">Toll-like receptor Tollo</fullName>
    </recommendedName>
    <alternativeName>
        <fullName evidence="19">Toll-like receptor 8</fullName>
    </alternativeName>
</protein>
<feature type="signal peptide" evidence="3">
    <location>
        <begin position="1"/>
        <end position="21"/>
    </location>
</feature>
<feature type="chain" id="PRO_5007216111" description="Toll-like receptor Tollo">
    <location>
        <begin position="22"/>
        <end position="1346"/>
    </location>
</feature>
<feature type="topological domain" description="Extracellular" evidence="19">
    <location>
        <begin position="22"/>
        <end position="1021"/>
    </location>
</feature>
<feature type="transmembrane region" description="Helical" evidence="3">
    <location>
        <begin position="1022"/>
        <end position="1042"/>
    </location>
</feature>
<feature type="topological domain" description="Cytoplasmic" evidence="19">
    <location>
        <begin position="1043"/>
        <end position="1346"/>
    </location>
</feature>
<feature type="repeat" description="LRR 1" evidence="3">
    <location>
        <begin position="97"/>
        <end position="120"/>
    </location>
</feature>
<feature type="repeat" description="LRR 2" evidence="3">
    <location>
        <begin position="124"/>
        <end position="146"/>
    </location>
</feature>
<feature type="repeat" description="LRR 3" evidence="3">
    <location>
        <begin position="151"/>
        <end position="174"/>
    </location>
</feature>
<feature type="repeat" description="LRR 4" evidence="3">
    <location>
        <begin position="176"/>
        <end position="198"/>
    </location>
</feature>
<feature type="repeat" description="LRR 5" evidence="3">
    <location>
        <begin position="209"/>
        <end position="232"/>
    </location>
</feature>
<feature type="repeat" description="LRR 6" evidence="3">
    <location>
        <begin position="234"/>
        <end position="256"/>
    </location>
</feature>
<feature type="repeat" description="LRR 7" evidence="3">
    <location>
        <begin position="257"/>
        <end position="280"/>
    </location>
</feature>
<feature type="repeat" description="LRR 8" evidence="3">
    <location>
        <begin position="282"/>
        <end position="304"/>
    </location>
</feature>
<feature type="repeat" description="LRR 9" evidence="3">
    <location>
        <begin position="306"/>
        <end position="330"/>
    </location>
</feature>
<feature type="repeat" description="LRR 10" evidence="3">
    <location>
        <begin position="331"/>
        <end position="354"/>
    </location>
</feature>
<feature type="repeat" description="LRR 11" evidence="3">
    <location>
        <begin position="355"/>
        <end position="378"/>
    </location>
</feature>
<feature type="repeat" description="LRR 12" evidence="3">
    <location>
        <begin position="380"/>
        <end position="402"/>
    </location>
</feature>
<feature type="repeat" description="LRR 13" evidence="3">
    <location>
        <begin position="404"/>
        <end position="426"/>
    </location>
</feature>
<feature type="repeat" description="LRR 14" evidence="3">
    <location>
        <begin position="427"/>
        <end position="450"/>
    </location>
</feature>
<feature type="repeat" description="LRR 15" evidence="3">
    <location>
        <begin position="452"/>
        <end position="473"/>
    </location>
</feature>
<feature type="repeat" description="LRR 16" evidence="3">
    <location>
        <begin position="474"/>
        <end position="497"/>
    </location>
</feature>
<feature type="repeat" description="LRR 17" evidence="3">
    <location>
        <begin position="498"/>
        <end position="521"/>
    </location>
</feature>
<feature type="repeat" description="LRR 18" evidence="3">
    <location>
        <begin position="523"/>
        <end position="544"/>
    </location>
</feature>
<feature type="repeat" description="LRR 19" evidence="3">
    <location>
        <begin position="546"/>
        <end position="568"/>
    </location>
</feature>
<feature type="repeat" description="LRR 20" evidence="3">
    <location>
        <begin position="570"/>
        <end position="591"/>
    </location>
</feature>
<feature type="repeat" description="LRR 21" evidence="3">
    <location>
        <begin position="593"/>
        <end position="614"/>
    </location>
</feature>
<feature type="repeat" description="LRR 22" evidence="3">
    <location>
        <begin position="615"/>
        <end position="637"/>
    </location>
</feature>
<feature type="repeat" description="LRR 23" evidence="3">
    <location>
        <begin position="638"/>
        <end position="661"/>
    </location>
</feature>
<feature type="repeat" description="LRR 24" evidence="3">
    <location>
        <begin position="790"/>
        <end position="813"/>
    </location>
</feature>
<feature type="repeat" description="LRR 25" evidence="3">
    <location>
        <begin position="814"/>
        <end position="837"/>
    </location>
</feature>
<feature type="repeat" description="LRR 26" evidence="3">
    <location>
        <begin position="838"/>
        <end position="861"/>
    </location>
</feature>
<feature type="repeat" description="LRR 27" evidence="3">
    <location>
        <begin position="863"/>
        <end position="885"/>
    </location>
</feature>
<feature type="repeat" description="LRR 28" evidence="3">
    <location>
        <begin position="887"/>
        <end position="909"/>
    </location>
</feature>
<feature type="repeat" description="LRR 29" evidence="3">
    <location>
        <begin position="912"/>
        <end position="938"/>
    </location>
</feature>
<feature type="domain" description="TIR" evidence="4">
    <location>
        <begin position="1074"/>
        <end position="1209"/>
    </location>
</feature>
<feature type="region of interest" description="Disordered" evidence="6">
    <location>
        <begin position="1235"/>
        <end position="1346"/>
    </location>
</feature>
<feature type="compositionally biased region" description="Low complexity" evidence="6">
    <location>
        <begin position="1267"/>
        <end position="1300"/>
    </location>
</feature>
<feature type="glycosylation site" description="N-linked (GlcNAc...) asparagine" evidence="5">
    <location>
        <position position="63"/>
    </location>
</feature>
<feature type="glycosylation site" description="N-linked (GlcNAc...) asparagine" evidence="5">
    <location>
        <position position="112"/>
    </location>
</feature>
<feature type="glycosylation site" description="N-linked (GlcNAc...) asparagine" evidence="5">
    <location>
        <position position="126"/>
    </location>
</feature>
<feature type="glycosylation site" description="N-linked (GlcNAc...) asparagine" evidence="5">
    <location>
        <position position="182"/>
    </location>
</feature>
<feature type="glycosylation site" description="N-linked (GlcNAc...) asparagine" evidence="5">
    <location>
        <position position="291"/>
    </location>
</feature>
<feature type="glycosylation site" description="N-linked (GlcNAc...) asparagine" evidence="5">
    <location>
        <position position="426"/>
    </location>
</feature>
<feature type="glycosylation site" description="N-linked (GlcNAc...) asparagine" evidence="5">
    <location>
        <position position="468"/>
    </location>
</feature>
<feature type="glycosylation site" description="N-linked (GlcNAc...) asparagine" evidence="5">
    <location>
        <position position="505"/>
    </location>
</feature>
<feature type="glycosylation site" description="N-linked (GlcNAc...) asparagine" evidence="5">
    <location>
        <position position="552"/>
    </location>
</feature>
<feature type="glycosylation site" description="N-linked (GlcNAc...) asparagine" evidence="5">
    <location>
        <position position="640"/>
    </location>
</feature>
<feature type="glycosylation site" description="N-linked (GlcNAc...) asparagine" evidence="5">
    <location>
        <position position="823"/>
    </location>
</feature>
<feature type="glycosylation site" description="N-linked (GlcNAc...) asparagine" evidence="5">
    <location>
        <position position="832"/>
    </location>
</feature>
<feature type="glycosylation site" description="N-linked (GlcNAc...) asparagine" evidence="5">
    <location>
        <position position="956"/>
    </location>
</feature>
<feature type="glycosylation site" description="N-linked (GlcNAc...) asparagine" evidence="5">
    <location>
        <position position="1000"/>
    </location>
</feature>
<feature type="disulfide bond" evidence="2">
    <location>
        <begin position="682"/>
        <end position="710"/>
    </location>
</feature>
<feature type="disulfide bond" evidence="2">
    <location>
        <begin position="684"/>
        <end position="733"/>
    </location>
</feature>
<feature type="disulfide bond" evidence="2">
    <location>
        <begin position="757"/>
        <end position="763"/>
    </location>
</feature>
<feature type="disulfide bond" evidence="2">
    <location>
        <begin position="761"/>
        <end position="776"/>
    </location>
</feature>
<feature type="disulfide bond" evidence="2">
    <location>
        <begin position="924"/>
        <end position="950"/>
    </location>
</feature>
<feature type="sequence conflict" description="In Ref. 3; ABA86508." evidence="19" ref="3">
    <location>
        <begin position="1"/>
        <end position="7"/>
    </location>
</feature>
<feature type="sequence conflict" description="In Ref. 3; ABA86508." evidence="19" ref="3">
    <original>Q</original>
    <variation>P</variation>
    <location>
        <position position="451"/>
    </location>
</feature>
<feature type="sequence conflict" description="In Ref. 3; ABA86508." evidence="19" ref="3">
    <original>QIRGNNNTTQQQQQQQAALLMGGGSVGGPAPQMIPLAGGIQQQSLPLPPNQQPTPASRNLHM</original>
    <variation>SNSRQQQHDAAAAATAGGLADGRRVGGWACSTDDSPGGWHPAAEPTIATEPATDAG</variation>
    <location>
        <begin position="1285"/>
        <end position="1346"/>
    </location>
</feature>
<keyword id="KW-1003">Cell membrane</keyword>
<keyword id="KW-1015">Disulfide bond</keyword>
<keyword id="KW-0325">Glycoprotein</keyword>
<keyword id="KW-0391">Immunity</keyword>
<keyword id="KW-0399">Innate immunity</keyword>
<keyword id="KW-0433">Leucine-rich repeat</keyword>
<keyword id="KW-0472">Membrane</keyword>
<keyword id="KW-0520">NAD</keyword>
<keyword id="KW-0524">Neurogenesis</keyword>
<keyword id="KW-0675">Receptor</keyword>
<keyword id="KW-1185">Reference proteome</keyword>
<keyword id="KW-0677">Repeat</keyword>
<keyword id="KW-0732">Signal</keyword>
<keyword id="KW-0812">Transmembrane</keyword>
<keyword id="KW-1133">Transmembrane helix</keyword>